<reference key="1">
    <citation type="journal article" date="2006" name="J. Bacteriol.">
        <title>The Methanosarcina barkeri genome: comparative analysis with Methanosarcina acetivorans and Methanosarcina mazei reveals extensive rearrangement within methanosarcinal genomes.</title>
        <authorList>
            <person name="Maeder D.L."/>
            <person name="Anderson I."/>
            <person name="Brettin T.S."/>
            <person name="Bruce D.C."/>
            <person name="Gilna P."/>
            <person name="Han C.S."/>
            <person name="Lapidus A."/>
            <person name="Metcalf W.W."/>
            <person name="Saunders E."/>
            <person name="Tapia R."/>
            <person name="Sowers K.R."/>
        </authorList>
    </citation>
    <scope>NUCLEOTIDE SEQUENCE [LARGE SCALE GENOMIC DNA]</scope>
    <source>
        <strain>Fusaro / DSM 804</strain>
    </source>
</reference>
<protein>
    <recommendedName>
        <fullName evidence="1">Probable L-tyrosine/L-aspartate decarboxylase</fullName>
        <shortName evidence="1">TDC/ADC</shortName>
        <ecNumber evidence="1">4.1.1.11</ecNumber>
        <ecNumber evidence="1">4.1.1.25</ecNumber>
    </recommendedName>
</protein>
<evidence type="ECO:0000255" key="1">
    <source>
        <dbReference type="HAMAP-Rule" id="MF_01610"/>
    </source>
</evidence>
<keyword id="KW-0210">Decarboxylase</keyword>
<keyword id="KW-0456">Lyase</keyword>
<keyword id="KW-0663">Pyridoxal phosphate</keyword>
<gene>
    <name evidence="1" type="primary">mfnA</name>
    <name type="ordered locus">Mbar_A0977</name>
</gene>
<sequence length="395" mass="43889">MNEQGLSEKEIFSYLEDVKSEDTDYYRVLSSMCTHPHRIAVEAHRLFIEANLGDLGLFAGAHRLEKEVIRMLGELLHAQSVEIPSGEACESSVCGYLTTGGTESNIQAIRGMKNLVTEDGKKSGEILNIVVPESAHFSFDKVANMMGIEVKRASLDPEFRVDIASAESLIDANTIGLVGIAGNTEFGQVDPIEELSKLALENELFLHVDAAFGGFVIPFLEKPYSFDFKVPGVTSIAIDPHKMGLSTIPSGALLFRSPFFMDSLKVNTPYLTTKSQFTLTGTRSGASAAATYAVMKYLGREGYRKNVQYCMQLTTKLVKEARKFGFEPLIEPVMNVVDLRVPNPDIVREQLLKKFGWNVSITRNPRSLRLVLMPHNTARDIEEFLQDLRKVTTEL</sequence>
<feature type="chain" id="PRO_0000293187" description="Probable L-tyrosine/L-aspartate decarboxylase">
    <location>
        <begin position="1"/>
        <end position="395"/>
    </location>
</feature>
<feature type="modified residue" description="N6-(pyridoxal phosphate)lysine" evidence="1">
    <location>
        <position position="242"/>
    </location>
</feature>
<proteinExistence type="inferred from homology"/>
<accession>Q46DU3</accession>
<dbReference type="EC" id="4.1.1.11" evidence="1"/>
<dbReference type="EC" id="4.1.1.25" evidence="1"/>
<dbReference type="EMBL" id="CP000099">
    <property type="protein sequence ID" value="AAZ69949.1"/>
    <property type="molecule type" value="Genomic_DNA"/>
</dbReference>
<dbReference type="SMR" id="Q46DU3"/>
<dbReference type="STRING" id="269797.Mbar_A0977"/>
<dbReference type="PaxDb" id="269797-Mbar_A0977"/>
<dbReference type="KEGG" id="mba:Mbar_A0977"/>
<dbReference type="eggNOG" id="arCOG00027">
    <property type="taxonomic scope" value="Archaea"/>
</dbReference>
<dbReference type="HOGENOM" id="CLU_028929_2_1_2"/>
<dbReference type="OrthoDB" id="56891at2157"/>
<dbReference type="UniPathway" id="UPA00080"/>
<dbReference type="UniPathway" id="UPA00241"/>
<dbReference type="GO" id="GO:0004068">
    <property type="term" value="F:aspartate 1-decarboxylase activity"/>
    <property type="evidence" value="ECO:0007669"/>
    <property type="project" value="UniProtKB-UniRule"/>
</dbReference>
<dbReference type="GO" id="GO:0030170">
    <property type="term" value="F:pyridoxal phosphate binding"/>
    <property type="evidence" value="ECO:0007669"/>
    <property type="project" value="UniProtKB-UniRule"/>
</dbReference>
<dbReference type="GO" id="GO:0004837">
    <property type="term" value="F:tyrosine decarboxylase activity"/>
    <property type="evidence" value="ECO:0007669"/>
    <property type="project" value="UniProtKB-UniRule"/>
</dbReference>
<dbReference type="GO" id="GO:0019752">
    <property type="term" value="P:carboxylic acid metabolic process"/>
    <property type="evidence" value="ECO:0007669"/>
    <property type="project" value="InterPro"/>
</dbReference>
<dbReference type="GO" id="GO:0015937">
    <property type="term" value="P:coenzyme A biosynthetic process"/>
    <property type="evidence" value="ECO:0007669"/>
    <property type="project" value="UniProtKB-UniRule"/>
</dbReference>
<dbReference type="GO" id="GO:2001120">
    <property type="term" value="P:methanofuran biosynthetic process"/>
    <property type="evidence" value="ECO:0007669"/>
    <property type="project" value="UniProtKB-UniRule"/>
</dbReference>
<dbReference type="FunFam" id="3.40.640.10:FF:000125">
    <property type="entry name" value="Probable L-tyrosine/L-aspartate decarboxylase"/>
    <property type="match status" value="1"/>
</dbReference>
<dbReference type="Gene3D" id="3.90.1150.10">
    <property type="entry name" value="Aspartate Aminotransferase, domain 1"/>
    <property type="match status" value="1"/>
</dbReference>
<dbReference type="Gene3D" id="3.40.640.10">
    <property type="entry name" value="Type I PLP-dependent aspartate aminotransferase-like (Major domain)"/>
    <property type="match status" value="1"/>
</dbReference>
<dbReference type="HAMAP" id="MF_01610">
    <property type="entry name" value="MfnA_decarbox"/>
    <property type="match status" value="1"/>
</dbReference>
<dbReference type="InterPro" id="IPR050477">
    <property type="entry name" value="GrpII_AminoAcid_Decarb"/>
</dbReference>
<dbReference type="InterPro" id="IPR020931">
    <property type="entry name" value="MfnA"/>
</dbReference>
<dbReference type="InterPro" id="IPR002129">
    <property type="entry name" value="PyrdxlP-dep_de-COase"/>
</dbReference>
<dbReference type="InterPro" id="IPR015424">
    <property type="entry name" value="PyrdxlP-dep_Trfase"/>
</dbReference>
<dbReference type="InterPro" id="IPR015421">
    <property type="entry name" value="PyrdxlP-dep_Trfase_major"/>
</dbReference>
<dbReference type="InterPro" id="IPR015422">
    <property type="entry name" value="PyrdxlP-dep_Trfase_small"/>
</dbReference>
<dbReference type="NCBIfam" id="TIGR03812">
    <property type="entry name" value="tyr_de_CO2_Arch"/>
    <property type="match status" value="1"/>
</dbReference>
<dbReference type="PANTHER" id="PTHR42735">
    <property type="match status" value="1"/>
</dbReference>
<dbReference type="PANTHER" id="PTHR42735:SF6">
    <property type="entry name" value="SPHINGOSINE-1-PHOSPHATE LYASE 1"/>
    <property type="match status" value="1"/>
</dbReference>
<dbReference type="Pfam" id="PF00282">
    <property type="entry name" value="Pyridoxal_deC"/>
    <property type="match status" value="1"/>
</dbReference>
<dbReference type="SUPFAM" id="SSF53383">
    <property type="entry name" value="PLP-dependent transferases"/>
    <property type="match status" value="1"/>
</dbReference>
<organism>
    <name type="scientific">Methanosarcina barkeri (strain Fusaro / DSM 804)</name>
    <dbReference type="NCBI Taxonomy" id="269797"/>
    <lineage>
        <taxon>Archaea</taxon>
        <taxon>Methanobacteriati</taxon>
        <taxon>Methanobacteriota</taxon>
        <taxon>Stenosarchaea group</taxon>
        <taxon>Methanomicrobia</taxon>
        <taxon>Methanosarcinales</taxon>
        <taxon>Methanosarcinaceae</taxon>
        <taxon>Methanosarcina</taxon>
    </lineage>
</organism>
<name>MFNA_METBF</name>
<comment type="function">
    <text evidence="1">Catalyzes the decarboxylation of L-tyrosine to produce tyramine for methanofuran biosynthesis. Can also catalyze the decarboxylation of L-aspartate to produce beta-alanine for coenzyme A (CoA) biosynthesis.</text>
</comment>
<comment type="catalytic activity">
    <reaction evidence="1">
        <text>L-tyrosine + H(+) = tyramine + CO2</text>
        <dbReference type="Rhea" id="RHEA:14345"/>
        <dbReference type="ChEBI" id="CHEBI:15378"/>
        <dbReference type="ChEBI" id="CHEBI:16526"/>
        <dbReference type="ChEBI" id="CHEBI:58315"/>
        <dbReference type="ChEBI" id="CHEBI:327995"/>
        <dbReference type="EC" id="4.1.1.25"/>
    </reaction>
</comment>
<comment type="catalytic activity">
    <reaction evidence="1">
        <text>L-aspartate + H(+) = beta-alanine + CO2</text>
        <dbReference type="Rhea" id="RHEA:19497"/>
        <dbReference type="ChEBI" id="CHEBI:15378"/>
        <dbReference type="ChEBI" id="CHEBI:16526"/>
        <dbReference type="ChEBI" id="CHEBI:29991"/>
        <dbReference type="ChEBI" id="CHEBI:57966"/>
        <dbReference type="EC" id="4.1.1.11"/>
    </reaction>
</comment>
<comment type="cofactor">
    <cofactor evidence="1">
        <name>pyridoxal 5'-phosphate</name>
        <dbReference type="ChEBI" id="CHEBI:597326"/>
    </cofactor>
</comment>
<comment type="pathway">
    <text evidence="1">Cofactor biosynthesis; methanofuran biosynthesis.</text>
</comment>
<comment type="pathway">
    <text evidence="1">Cofactor biosynthesis; coenzyme A biosynthesis.</text>
</comment>
<comment type="similarity">
    <text evidence="1">Belongs to the group II decarboxylase family. MfnA subfamily.</text>
</comment>